<name>SURE_METHJ</name>
<keyword id="KW-0963">Cytoplasm</keyword>
<keyword id="KW-0378">Hydrolase</keyword>
<keyword id="KW-0479">Metal-binding</keyword>
<keyword id="KW-0547">Nucleotide-binding</keyword>
<keyword id="KW-1185">Reference proteome</keyword>
<organism>
    <name type="scientific">Methanospirillum hungatei JF-1 (strain ATCC 27890 / DSM 864 / NBRC 100397 / JF-1)</name>
    <dbReference type="NCBI Taxonomy" id="323259"/>
    <lineage>
        <taxon>Archaea</taxon>
        <taxon>Methanobacteriati</taxon>
        <taxon>Methanobacteriota</taxon>
        <taxon>Stenosarchaea group</taxon>
        <taxon>Methanomicrobia</taxon>
        <taxon>Methanomicrobiales</taxon>
        <taxon>Methanospirillaceae</taxon>
        <taxon>Methanospirillum</taxon>
    </lineage>
</organism>
<gene>
    <name evidence="1" type="primary">surE</name>
    <name type="ordered locus">Mhun_0570</name>
</gene>
<dbReference type="EC" id="3.1.3.5" evidence="1"/>
<dbReference type="EMBL" id="CP000254">
    <property type="protein sequence ID" value="ABD40330.1"/>
    <property type="molecule type" value="Genomic_DNA"/>
</dbReference>
<dbReference type="RefSeq" id="WP_011447616.1">
    <property type="nucleotide sequence ID" value="NC_007796.1"/>
</dbReference>
<dbReference type="SMR" id="Q2FLE8"/>
<dbReference type="FunCoup" id="Q2FLE8">
    <property type="interactions" value="28"/>
</dbReference>
<dbReference type="STRING" id="323259.Mhun_0570"/>
<dbReference type="EnsemblBacteria" id="ABD40330">
    <property type="protein sequence ID" value="ABD40330"/>
    <property type="gene ID" value="Mhun_0570"/>
</dbReference>
<dbReference type="GeneID" id="3923147"/>
<dbReference type="KEGG" id="mhu:Mhun_0570"/>
<dbReference type="eggNOG" id="arCOG02303">
    <property type="taxonomic scope" value="Archaea"/>
</dbReference>
<dbReference type="HOGENOM" id="CLU_045192_1_3_2"/>
<dbReference type="InParanoid" id="Q2FLE8"/>
<dbReference type="OrthoDB" id="26873at2157"/>
<dbReference type="Proteomes" id="UP000001941">
    <property type="component" value="Chromosome"/>
</dbReference>
<dbReference type="GO" id="GO:0005737">
    <property type="term" value="C:cytoplasm"/>
    <property type="evidence" value="ECO:0007669"/>
    <property type="project" value="UniProtKB-SubCell"/>
</dbReference>
<dbReference type="GO" id="GO:0008253">
    <property type="term" value="F:5'-nucleotidase activity"/>
    <property type="evidence" value="ECO:0007669"/>
    <property type="project" value="UniProtKB-UniRule"/>
</dbReference>
<dbReference type="GO" id="GO:0046872">
    <property type="term" value="F:metal ion binding"/>
    <property type="evidence" value="ECO:0007669"/>
    <property type="project" value="UniProtKB-UniRule"/>
</dbReference>
<dbReference type="GO" id="GO:0000166">
    <property type="term" value="F:nucleotide binding"/>
    <property type="evidence" value="ECO:0007669"/>
    <property type="project" value="UniProtKB-KW"/>
</dbReference>
<dbReference type="Gene3D" id="3.40.1210.10">
    <property type="entry name" value="Survival protein SurE-like phosphatase/nucleotidase"/>
    <property type="match status" value="1"/>
</dbReference>
<dbReference type="HAMAP" id="MF_00060">
    <property type="entry name" value="SurE"/>
    <property type="match status" value="1"/>
</dbReference>
<dbReference type="InterPro" id="IPR030048">
    <property type="entry name" value="SurE"/>
</dbReference>
<dbReference type="InterPro" id="IPR002828">
    <property type="entry name" value="SurE-like_Pase/nucleotidase"/>
</dbReference>
<dbReference type="InterPro" id="IPR036523">
    <property type="entry name" value="SurE-like_sf"/>
</dbReference>
<dbReference type="NCBIfam" id="NF001491">
    <property type="entry name" value="PRK00346.2-1"/>
    <property type="match status" value="1"/>
</dbReference>
<dbReference type="NCBIfam" id="TIGR00087">
    <property type="entry name" value="surE"/>
    <property type="match status" value="1"/>
</dbReference>
<dbReference type="PANTHER" id="PTHR30457">
    <property type="entry name" value="5'-NUCLEOTIDASE SURE"/>
    <property type="match status" value="1"/>
</dbReference>
<dbReference type="PANTHER" id="PTHR30457:SF0">
    <property type="entry name" value="PHOSPHATASE, PUTATIVE (AFU_ORTHOLOGUE AFUA_4G01070)-RELATED"/>
    <property type="match status" value="1"/>
</dbReference>
<dbReference type="Pfam" id="PF01975">
    <property type="entry name" value="SurE"/>
    <property type="match status" value="1"/>
</dbReference>
<dbReference type="SUPFAM" id="SSF64167">
    <property type="entry name" value="SurE-like"/>
    <property type="match status" value="1"/>
</dbReference>
<comment type="function">
    <text evidence="1">Nucleotidase that shows phosphatase activity on nucleoside 5'-monophosphates.</text>
</comment>
<comment type="catalytic activity">
    <reaction evidence="1">
        <text>a ribonucleoside 5'-phosphate + H2O = a ribonucleoside + phosphate</text>
        <dbReference type="Rhea" id="RHEA:12484"/>
        <dbReference type="ChEBI" id="CHEBI:15377"/>
        <dbReference type="ChEBI" id="CHEBI:18254"/>
        <dbReference type="ChEBI" id="CHEBI:43474"/>
        <dbReference type="ChEBI" id="CHEBI:58043"/>
        <dbReference type="EC" id="3.1.3.5"/>
    </reaction>
</comment>
<comment type="cofactor">
    <cofactor evidence="1">
        <name>a divalent metal cation</name>
        <dbReference type="ChEBI" id="CHEBI:60240"/>
    </cofactor>
    <text evidence="1">Binds 1 divalent metal cation per subunit.</text>
</comment>
<comment type="subcellular location">
    <subcellularLocation>
        <location evidence="1">Cytoplasm</location>
    </subcellularLocation>
</comment>
<comment type="similarity">
    <text evidence="1">Belongs to the SurE nucleotidase family.</text>
</comment>
<feature type="chain" id="PRO_0000235679" description="5'-nucleotidase SurE">
    <location>
        <begin position="1"/>
        <end position="279"/>
    </location>
</feature>
<feature type="binding site" evidence="1">
    <location>
        <position position="28"/>
    </location>
    <ligand>
        <name>a divalent metal cation</name>
        <dbReference type="ChEBI" id="CHEBI:60240"/>
    </ligand>
</feature>
<feature type="binding site" evidence="1">
    <location>
        <position position="29"/>
    </location>
    <ligand>
        <name>a divalent metal cation</name>
        <dbReference type="ChEBI" id="CHEBI:60240"/>
    </ligand>
</feature>
<feature type="binding site" evidence="1">
    <location>
        <position position="59"/>
    </location>
    <ligand>
        <name>a divalent metal cation</name>
        <dbReference type="ChEBI" id="CHEBI:60240"/>
    </ligand>
</feature>
<feature type="binding site" evidence="1">
    <location>
        <position position="113"/>
    </location>
    <ligand>
        <name>a divalent metal cation</name>
        <dbReference type="ChEBI" id="CHEBI:60240"/>
    </ligand>
</feature>
<accession>Q2FLE8</accession>
<sequence length="279" mass="30199">MISGSPPDSTPSHHHFSLKRPCILLTNDDGVNSEGLWAAYDALFEWADVVVCAPATQQSAVGRSLSIFEPLRVNTVSRGDITAYAVGGKPTDSVILALFALGVKPDLVVSGINIGENLSYEAITTSGTVGAALEAANHGYPAVAFSLQIEDQKEKFDDARHLADRFSESKGVVRDVIRRILEKGFPSFTHVMNVNIPSIITGGYEITHLAEHLFITGVEKRLDPRGKPYYWINGPLVTDAPEGTDVHAIHKGNISITPITLDCTAYAGTDDLRRLFSLE</sequence>
<evidence type="ECO:0000255" key="1">
    <source>
        <dbReference type="HAMAP-Rule" id="MF_00060"/>
    </source>
</evidence>
<proteinExistence type="inferred from homology"/>
<reference key="1">
    <citation type="journal article" date="2016" name="Stand. Genomic Sci.">
        <title>Complete genome sequence of Methanospirillum hungatei type strain JF1.</title>
        <authorList>
            <person name="Gunsalus R.P."/>
            <person name="Cook L.E."/>
            <person name="Crable B."/>
            <person name="Rohlin L."/>
            <person name="McDonald E."/>
            <person name="Mouttaki H."/>
            <person name="Sieber J.R."/>
            <person name="Poweleit N."/>
            <person name="Zhou H."/>
            <person name="Lapidus A.L."/>
            <person name="Daligault H.E."/>
            <person name="Land M."/>
            <person name="Gilna P."/>
            <person name="Ivanova N."/>
            <person name="Kyrpides N."/>
            <person name="Culley D.E."/>
            <person name="McInerney M.J."/>
        </authorList>
    </citation>
    <scope>NUCLEOTIDE SEQUENCE [LARGE SCALE GENOMIC DNA]</scope>
    <source>
        <strain>ATCC 27890 / DSM 864 / NBRC 100397 / JF-1</strain>
    </source>
</reference>
<protein>
    <recommendedName>
        <fullName evidence="1">5'-nucleotidase SurE</fullName>
        <ecNumber evidence="1">3.1.3.5</ecNumber>
    </recommendedName>
    <alternativeName>
        <fullName evidence="1">Nucleoside 5'-monophosphate phosphohydrolase</fullName>
    </alternativeName>
</protein>